<dbReference type="EMBL" id="U92539">
    <property type="protein sequence ID" value="AAC49897.1"/>
    <property type="molecule type" value="mRNA"/>
</dbReference>
<dbReference type="EMBL" id="CU329671">
    <property type="protein sequence ID" value="CAA22818.1"/>
    <property type="molecule type" value="Genomic_DNA"/>
</dbReference>
<dbReference type="PIR" id="T40590">
    <property type="entry name" value="T40590"/>
</dbReference>
<dbReference type="RefSeq" id="NP_595372.1">
    <property type="nucleotide sequence ID" value="NM_001021280.2"/>
</dbReference>
<dbReference type="SMR" id="O43114"/>
<dbReference type="BioGRID" id="277622">
    <property type="interactions" value="11"/>
</dbReference>
<dbReference type="FunCoup" id="O43114">
    <property type="interactions" value="993"/>
</dbReference>
<dbReference type="STRING" id="284812.O43114"/>
<dbReference type="iPTMnet" id="O43114"/>
<dbReference type="PaxDb" id="4896-SPBC646.14c.1"/>
<dbReference type="EnsemblFungi" id="SPBC646.14c.1">
    <property type="protein sequence ID" value="SPBC646.14c.1:pep"/>
    <property type="gene ID" value="SPBC646.14c"/>
</dbReference>
<dbReference type="GeneID" id="2541107"/>
<dbReference type="KEGG" id="spo:2541107"/>
<dbReference type="PomBase" id="SPBC646.14c">
    <property type="gene designation" value="orc5"/>
</dbReference>
<dbReference type="VEuPathDB" id="FungiDB:SPBC646.14c"/>
<dbReference type="eggNOG" id="KOG2543">
    <property type="taxonomic scope" value="Eukaryota"/>
</dbReference>
<dbReference type="HOGENOM" id="CLU_028223_2_0_1"/>
<dbReference type="InParanoid" id="O43114"/>
<dbReference type="OMA" id="AYICSYL"/>
<dbReference type="PhylomeDB" id="O43114"/>
<dbReference type="Reactome" id="R-SPO-176187">
    <property type="pathway name" value="Activation of ATR in response to replication stress"/>
</dbReference>
<dbReference type="Reactome" id="R-SPO-68616">
    <property type="pathway name" value="Assembly of the ORC complex at the origin of replication"/>
</dbReference>
<dbReference type="Reactome" id="R-SPO-68689">
    <property type="pathway name" value="CDC6 association with the ORC:origin complex"/>
</dbReference>
<dbReference type="Reactome" id="R-SPO-68949">
    <property type="pathway name" value="Orc1 removal from chromatin"/>
</dbReference>
<dbReference type="Reactome" id="R-SPO-68962">
    <property type="pathway name" value="Activation of the pre-replicative complex"/>
</dbReference>
<dbReference type="PRO" id="PR:O43114"/>
<dbReference type="Proteomes" id="UP000002485">
    <property type="component" value="Chromosome II"/>
</dbReference>
<dbReference type="GO" id="GO:0000785">
    <property type="term" value="C:chromatin"/>
    <property type="evidence" value="ECO:0000314"/>
    <property type="project" value="PomBase"/>
</dbReference>
<dbReference type="GO" id="GO:0031261">
    <property type="term" value="C:DNA replication preinitiation complex"/>
    <property type="evidence" value="ECO:0000305"/>
    <property type="project" value="PomBase"/>
</dbReference>
<dbReference type="GO" id="GO:0005664">
    <property type="term" value="C:nuclear origin of replication recognition complex"/>
    <property type="evidence" value="ECO:0000314"/>
    <property type="project" value="UniProtKB"/>
</dbReference>
<dbReference type="GO" id="GO:0005656">
    <property type="term" value="C:nuclear pre-replicative complex"/>
    <property type="evidence" value="ECO:0000305"/>
    <property type="project" value="PomBase"/>
</dbReference>
<dbReference type="GO" id="GO:0043596">
    <property type="term" value="C:nuclear replication fork"/>
    <property type="evidence" value="ECO:0000305"/>
    <property type="project" value="PomBase"/>
</dbReference>
<dbReference type="GO" id="GO:0005634">
    <property type="term" value="C:nucleus"/>
    <property type="evidence" value="ECO:0007005"/>
    <property type="project" value="PomBase"/>
</dbReference>
<dbReference type="GO" id="GO:0005524">
    <property type="term" value="F:ATP binding"/>
    <property type="evidence" value="ECO:0000250"/>
    <property type="project" value="UniProtKB"/>
</dbReference>
<dbReference type="GO" id="GO:0016887">
    <property type="term" value="F:ATP hydrolysis activity"/>
    <property type="evidence" value="ECO:0000303"/>
    <property type="project" value="PomBase"/>
</dbReference>
<dbReference type="GO" id="GO:0003688">
    <property type="term" value="F:DNA replication origin binding"/>
    <property type="evidence" value="ECO:0000314"/>
    <property type="project" value="UniProtKB"/>
</dbReference>
<dbReference type="GO" id="GO:0006270">
    <property type="term" value="P:DNA replication initiation"/>
    <property type="evidence" value="ECO:0000318"/>
    <property type="project" value="GO_Central"/>
</dbReference>
<dbReference type="GO" id="GO:1902975">
    <property type="term" value="P:mitotic DNA replication initiation"/>
    <property type="evidence" value="ECO:0000315"/>
    <property type="project" value="PomBase"/>
</dbReference>
<dbReference type="Gene3D" id="3.40.50.300">
    <property type="entry name" value="P-loop containing nucleotide triphosphate hydrolases"/>
    <property type="match status" value="1"/>
</dbReference>
<dbReference type="InterPro" id="IPR041664">
    <property type="entry name" value="AAA_16"/>
</dbReference>
<dbReference type="InterPro" id="IPR020796">
    <property type="entry name" value="ORC5"/>
</dbReference>
<dbReference type="InterPro" id="IPR047088">
    <property type="entry name" value="ORC5_C"/>
</dbReference>
<dbReference type="InterPro" id="IPR048866">
    <property type="entry name" value="ORC5_lid"/>
</dbReference>
<dbReference type="InterPro" id="IPR027417">
    <property type="entry name" value="P-loop_NTPase"/>
</dbReference>
<dbReference type="PANTHER" id="PTHR12705">
    <property type="entry name" value="ORIGIN RECOGNITION COMPLEX SUBUNIT 5"/>
    <property type="match status" value="1"/>
</dbReference>
<dbReference type="PANTHER" id="PTHR12705:SF0">
    <property type="entry name" value="ORIGIN RECOGNITION COMPLEX SUBUNIT 5"/>
    <property type="match status" value="1"/>
</dbReference>
<dbReference type="Pfam" id="PF13191">
    <property type="entry name" value="AAA_16"/>
    <property type="match status" value="1"/>
</dbReference>
<dbReference type="Pfam" id="PF14630">
    <property type="entry name" value="ORC5_C"/>
    <property type="match status" value="1"/>
</dbReference>
<dbReference type="Pfam" id="PF21639">
    <property type="entry name" value="ORC5_lid"/>
    <property type="match status" value="1"/>
</dbReference>
<dbReference type="SUPFAM" id="SSF52540">
    <property type="entry name" value="P-loop containing nucleoside triphosphate hydrolases"/>
    <property type="match status" value="1"/>
</dbReference>
<sequence length="455" mass="51762">MHLYQLEDELKKNVFCREDQIKKLSCLLFNKDCRVPSIVLYGVASTAKTFLLRTAFDLSKEENVWINLQDCFTVAHFWYRILIKVGVDKDIALKKGINISGFIYLLEQAMSKRDYHTFLVLDQIDDFAEASTILFSQLAQLPIVANIPNLSIIFVLHSHPAQYLGTLSIAVIFFPQYTQAEILEICQKTPPNLDFLDRSGDSVFEDEIELSVWMQYCSFLWSVFGVQCLNDYRSFRSVLDRYWPKFIQPIVEGDIHPADYAQLHKLAKNFLVSDATVTKRLHIINPTEIKNLLDSKSINLSLVSKYLLVSAFLASYNPSRLDAQFFSFSKTSKRRGRKRKQIQDEGVLFSKIPRTAGSKGRSAVKISQLTLGPKPFEVERLIAIYYAISSPVEKVLTADVFVQIATLASLKMILSASKGVLRSLDSPRYIVNVSREYVLKIADSLSFPLDSYLAG</sequence>
<organism>
    <name type="scientific">Schizosaccharomyces pombe (strain 972 / ATCC 24843)</name>
    <name type="common">Fission yeast</name>
    <dbReference type="NCBI Taxonomy" id="284812"/>
    <lineage>
        <taxon>Eukaryota</taxon>
        <taxon>Fungi</taxon>
        <taxon>Dikarya</taxon>
        <taxon>Ascomycota</taxon>
        <taxon>Taphrinomycotina</taxon>
        <taxon>Schizosaccharomycetes</taxon>
        <taxon>Schizosaccharomycetales</taxon>
        <taxon>Schizosaccharomycetaceae</taxon>
        <taxon>Schizosaccharomyces</taxon>
    </lineage>
</organism>
<gene>
    <name type="primary">orc5</name>
    <name type="synonym">orp5</name>
    <name type="ORF">SPBC646.14c</name>
</gene>
<proteinExistence type="evidence at protein level"/>
<protein>
    <recommendedName>
        <fullName>Origin recognition complex subunit 5</fullName>
    </recommendedName>
</protein>
<reference key="1">
    <citation type="journal article" date="1997" name="Genomics">
        <title>Isolation of human and fission yeast homologues of the budding yeast origin recognition complex subunit ORC5: human homologue (ORC5L) maps to 7q22.</title>
        <authorList>
            <person name="Ishiai M."/>
            <person name="Dean F.B."/>
            <person name="Okumura K."/>
            <person name="Abe M."/>
            <person name="Moon K.-Y."/>
            <person name="Amin A.A."/>
            <person name="Kagotani K."/>
            <person name="Taguchi H."/>
            <person name="Murakami Y."/>
            <person name="Hanaoka F."/>
            <person name="O'Donnell M."/>
            <person name="Hurwitz J."/>
            <person name="Eki T."/>
        </authorList>
    </citation>
    <scope>NUCLEOTIDE SEQUENCE [MRNA]</scope>
    <source>
        <strain>972 / ATCC 24843</strain>
    </source>
</reference>
<reference key="2">
    <citation type="journal article" date="2002" name="Nature">
        <title>The genome sequence of Schizosaccharomyces pombe.</title>
        <authorList>
            <person name="Wood V."/>
            <person name="Gwilliam R."/>
            <person name="Rajandream M.A."/>
            <person name="Lyne M.H."/>
            <person name="Lyne R."/>
            <person name="Stewart A."/>
            <person name="Sgouros J.G."/>
            <person name="Peat N."/>
            <person name="Hayles J."/>
            <person name="Baker S.G."/>
            <person name="Basham D."/>
            <person name="Bowman S."/>
            <person name="Brooks K."/>
            <person name="Brown D."/>
            <person name="Brown S."/>
            <person name="Chillingworth T."/>
            <person name="Churcher C.M."/>
            <person name="Collins M."/>
            <person name="Connor R."/>
            <person name="Cronin A."/>
            <person name="Davis P."/>
            <person name="Feltwell T."/>
            <person name="Fraser A."/>
            <person name="Gentles S."/>
            <person name="Goble A."/>
            <person name="Hamlin N."/>
            <person name="Harris D.E."/>
            <person name="Hidalgo J."/>
            <person name="Hodgson G."/>
            <person name="Holroyd S."/>
            <person name="Hornsby T."/>
            <person name="Howarth S."/>
            <person name="Huckle E.J."/>
            <person name="Hunt S."/>
            <person name="Jagels K."/>
            <person name="James K.D."/>
            <person name="Jones L."/>
            <person name="Jones M."/>
            <person name="Leather S."/>
            <person name="McDonald S."/>
            <person name="McLean J."/>
            <person name="Mooney P."/>
            <person name="Moule S."/>
            <person name="Mungall K.L."/>
            <person name="Murphy L.D."/>
            <person name="Niblett D."/>
            <person name="Odell C."/>
            <person name="Oliver K."/>
            <person name="O'Neil S."/>
            <person name="Pearson D."/>
            <person name="Quail M.A."/>
            <person name="Rabbinowitsch E."/>
            <person name="Rutherford K.M."/>
            <person name="Rutter S."/>
            <person name="Saunders D."/>
            <person name="Seeger K."/>
            <person name="Sharp S."/>
            <person name="Skelton J."/>
            <person name="Simmonds M.N."/>
            <person name="Squares R."/>
            <person name="Squares S."/>
            <person name="Stevens K."/>
            <person name="Taylor K."/>
            <person name="Taylor R.G."/>
            <person name="Tivey A."/>
            <person name="Walsh S.V."/>
            <person name="Warren T."/>
            <person name="Whitehead S."/>
            <person name="Woodward J.R."/>
            <person name="Volckaert G."/>
            <person name="Aert R."/>
            <person name="Robben J."/>
            <person name="Grymonprez B."/>
            <person name="Weltjens I."/>
            <person name="Vanstreels E."/>
            <person name="Rieger M."/>
            <person name="Schaefer M."/>
            <person name="Mueller-Auer S."/>
            <person name="Gabel C."/>
            <person name="Fuchs M."/>
            <person name="Duesterhoeft A."/>
            <person name="Fritzc C."/>
            <person name="Holzer E."/>
            <person name="Moestl D."/>
            <person name="Hilbert H."/>
            <person name="Borzym K."/>
            <person name="Langer I."/>
            <person name="Beck A."/>
            <person name="Lehrach H."/>
            <person name="Reinhardt R."/>
            <person name="Pohl T.M."/>
            <person name="Eger P."/>
            <person name="Zimmermann W."/>
            <person name="Wedler H."/>
            <person name="Wambutt R."/>
            <person name="Purnelle B."/>
            <person name="Goffeau A."/>
            <person name="Cadieu E."/>
            <person name="Dreano S."/>
            <person name="Gloux S."/>
            <person name="Lelaure V."/>
            <person name="Mottier S."/>
            <person name="Galibert F."/>
            <person name="Aves S.J."/>
            <person name="Xiang Z."/>
            <person name="Hunt C."/>
            <person name="Moore K."/>
            <person name="Hurst S.M."/>
            <person name="Lucas M."/>
            <person name="Rochet M."/>
            <person name="Gaillardin C."/>
            <person name="Tallada V.A."/>
            <person name="Garzon A."/>
            <person name="Thode G."/>
            <person name="Daga R.R."/>
            <person name="Cruzado L."/>
            <person name="Jimenez J."/>
            <person name="Sanchez M."/>
            <person name="del Rey F."/>
            <person name="Benito J."/>
            <person name="Dominguez A."/>
            <person name="Revuelta J.L."/>
            <person name="Moreno S."/>
            <person name="Armstrong J."/>
            <person name="Forsburg S.L."/>
            <person name="Cerutti L."/>
            <person name="Lowe T."/>
            <person name="McCombie W.R."/>
            <person name="Paulsen I."/>
            <person name="Potashkin J."/>
            <person name="Shpakovski G.V."/>
            <person name="Ussery D."/>
            <person name="Barrell B.G."/>
            <person name="Nurse P."/>
        </authorList>
    </citation>
    <scope>NUCLEOTIDE SEQUENCE [LARGE SCALE GENOMIC DNA]</scope>
    <source>
        <strain>972 / ATCC 24843</strain>
    </source>
</reference>
<reference key="3">
    <citation type="journal article" date="1999" name="Proc. Natl. Acad. Sci. U.S.A.">
        <title>Identification and reconstitution of the origin recognition complex from Schizosaccharomyces pombe.</title>
        <authorList>
            <person name="Moon K.-Y."/>
            <person name="Kong D."/>
            <person name="Lee J.-K."/>
            <person name="Raychaudhuri S."/>
            <person name="Hurwitz J."/>
        </authorList>
    </citation>
    <scope>SUBUNIT</scope>
</reference>
<reference key="4">
    <citation type="journal article" date="2002" name="J. Biol. Chem.">
        <title>Purification and characterization of the Schizosaccharomyces pombe origin recognition complex: interaction with origin DNA and Cdc18 protein.</title>
        <authorList>
            <person name="Chuang R.-Y."/>
            <person name="Chretien L."/>
            <person name="Dai J."/>
            <person name="Kelly T.J."/>
        </authorList>
    </citation>
    <scope>CHARACTERIZATION OF ORC</scope>
    <scope>INTERACTION WITH CDC18</scope>
</reference>
<keyword id="KW-0067">ATP-binding</keyword>
<keyword id="KW-0235">DNA replication</keyword>
<keyword id="KW-0547">Nucleotide-binding</keyword>
<keyword id="KW-0539">Nucleus</keyword>
<keyword id="KW-1185">Reference proteome</keyword>
<feature type="chain" id="PRO_0000127095" description="Origin recognition complex subunit 5">
    <location>
        <begin position="1"/>
        <end position="455"/>
    </location>
</feature>
<feature type="binding site" evidence="1">
    <location>
        <begin position="42"/>
        <end position="49"/>
    </location>
    <ligand>
        <name>ATP</name>
        <dbReference type="ChEBI" id="CHEBI:30616"/>
    </ligand>
</feature>
<feature type="sequence conflict" description="In Ref. 1; AAC49897." evidence="4" ref="1">
    <original>F</original>
    <variation>S</variation>
    <location>
        <position position="328"/>
    </location>
</feature>
<name>ORC5_SCHPO</name>
<evidence type="ECO:0000255" key="1"/>
<evidence type="ECO:0000269" key="2">
    <source>
    </source>
</evidence>
<evidence type="ECO:0000269" key="3">
    <source>
    </source>
</evidence>
<evidence type="ECO:0000305" key="4"/>
<comment type="function">
    <text>Component of the origin recognition complex (ORC) that binds origins of replication. It has a role in both chromosomal replication and mating type transcriptional silencing. ORC binds to multiple sites within the ars1 origin of DNA replication in an ATP-independent manner.</text>
</comment>
<comment type="subunit">
    <text evidence="2 3">ORC is composed of six subunits. ORC interacts with cdc18, recruiting it to the ars1 origin of replication.</text>
</comment>
<comment type="subcellular location">
    <subcellularLocation>
        <location>Nucleus</location>
    </subcellularLocation>
</comment>
<comment type="similarity">
    <text evidence="4">Belongs to the ORC5 family.</text>
</comment>
<accession>O43114</accession>
<accession>Q9UQW3</accession>